<proteinExistence type="evidence at transcript level"/>
<feature type="chain" id="PRO_0000341541" description="RNA-binding motif protein, Y chromosome, family 9">
    <location>
        <begin position="1"/>
        <end position="380"/>
    </location>
</feature>
<feature type="domain" description="RRM" evidence="3">
    <location>
        <begin position="8"/>
        <end position="86"/>
    </location>
</feature>
<feature type="region of interest" description="Disordered" evidence="4">
    <location>
        <begin position="82"/>
        <end position="226"/>
    </location>
</feature>
<feature type="region of interest" description="Disordered" evidence="4">
    <location>
        <begin position="279"/>
        <end position="358"/>
    </location>
</feature>
<feature type="compositionally biased region" description="Polar residues" evidence="4">
    <location>
        <begin position="166"/>
        <end position="178"/>
    </location>
</feature>
<feature type="compositionally biased region" description="Basic and acidic residues" evidence="4">
    <location>
        <begin position="180"/>
        <end position="190"/>
    </location>
</feature>
<feature type="compositionally biased region" description="Basic and acidic residues" evidence="4">
    <location>
        <begin position="333"/>
        <end position="351"/>
    </location>
</feature>
<feature type="sequence conflict" description="In Ref. 1; AAB81555." evidence="8" ref="1">
    <original>H</original>
    <variation>R</variation>
    <location>
        <position position="235"/>
    </location>
</feature>
<feature type="sequence conflict" description="In Ref. 1; AAB81555." evidence="8" ref="1">
    <original>E</original>
    <variation>Q</variation>
    <location>
        <position position="239"/>
    </location>
</feature>
<feature type="sequence conflict" description="In Ref. 1; AAB81555." evidence="8" ref="1">
    <original>S</original>
    <variation>N</variation>
    <location>
        <position position="363"/>
    </location>
</feature>
<comment type="function">
    <text evidence="2">RNA-binding protein which may be involved in spermatogenesis (By similarity). May be required for sperm development, possibly by participating in pre-mRNA splicing in the testis (By similarity).</text>
</comment>
<comment type="subcellular location">
    <subcellularLocation>
        <location evidence="1">Nucleus</location>
    </subcellularLocation>
</comment>
<comment type="tissue specificity">
    <text evidence="6">Testis-specific.</text>
</comment>
<comment type="developmental stage">
    <text evidence="5 6">Only expressed in spermatogonia and early spermatocytes, suggesting that expression is inactivated in the XY body during meiosis.</text>
</comment>
<comment type="miscellaneous">
    <text>The RBMY1 proteins are encoded by repeated regions of the Y chromosome. The exact number of functional copies is unclear and may vary between individuals, and some of them may represent pseudogenes.</text>
</comment>
<comment type="miscellaneous">
    <text>Overexpression of Rbmy proteins in mice carrying the Y(d1) deletion that removes most of the multi-copy Rbmy gene cluster does not have any effect and fails to reduce the frequency of abnormal sperm. These results raize the question of the role of Rbmy proteins in sperm development.</text>
</comment>
<reference key="1">
    <citation type="journal article" date="1996" name="Hum. Mol. Genet.">
        <title>An RBM homologue maps to the mouse Y chromosome and is expressed in germ cells.</title>
        <authorList>
            <person name="Elliott D.J."/>
            <person name="Ma K."/>
            <person name="Kerr S.M."/>
            <person name="Thakrar R."/>
            <person name="Speed R."/>
            <person name="Chandley A.C."/>
            <person name="Cooke H."/>
        </authorList>
    </citation>
    <scope>NUCLEOTIDE SEQUENCE [MRNA]</scope>
    <scope>TISSUE SPECIFICITY</scope>
    <scope>DEVELOPMENTAL STAGE</scope>
</reference>
<reference key="2">
    <citation type="journal article" date="2009" name="PLoS Biol.">
        <title>Lineage-specific biology revealed by a finished genome assembly of the mouse.</title>
        <authorList>
            <person name="Church D.M."/>
            <person name="Goodstadt L."/>
            <person name="Hillier L.W."/>
            <person name="Zody M.C."/>
            <person name="Goldstein S."/>
            <person name="She X."/>
            <person name="Bult C.J."/>
            <person name="Agarwala R."/>
            <person name="Cherry J.L."/>
            <person name="DiCuccio M."/>
            <person name="Hlavina W."/>
            <person name="Kapustin Y."/>
            <person name="Meric P."/>
            <person name="Maglott D."/>
            <person name="Birtle Z."/>
            <person name="Marques A.C."/>
            <person name="Graves T."/>
            <person name="Zhou S."/>
            <person name="Teague B."/>
            <person name="Potamousis K."/>
            <person name="Churas C."/>
            <person name="Place M."/>
            <person name="Herschleb J."/>
            <person name="Runnheim R."/>
            <person name="Forrest D."/>
            <person name="Amos-Landgraf J."/>
            <person name="Schwartz D.C."/>
            <person name="Cheng Z."/>
            <person name="Lindblad-Toh K."/>
            <person name="Eichler E.E."/>
            <person name="Ponting C.P."/>
        </authorList>
    </citation>
    <scope>NUCLEOTIDE SEQUENCE [LARGE SCALE GENOMIC DNA]</scope>
    <source>
        <strain>C57BL/6J</strain>
    </source>
</reference>
<reference key="3">
    <citation type="journal article" date="2002" name="J. Cell Sci.">
        <title>Meiotic sex chromosome inactivation in male mice with targeted disruptions of Xist.</title>
        <authorList>
            <person name="Turner J.M.A."/>
            <person name="Mahadevaiah S.K."/>
            <person name="Elliott D.J."/>
            <person name="Garchon H.-J."/>
            <person name="Pehrson J.R."/>
            <person name="Jaenisch R."/>
            <person name="Burgoyne P.S."/>
        </authorList>
    </citation>
    <scope>DEVELOPMENTAL STAGE</scope>
</reference>
<reference key="4">
    <citation type="journal article" date="2003" name="Cytogenet. Genome Res.">
        <title>Does Rbmy have a role in sperm development in mice?</title>
        <authorList>
            <person name="Szot M."/>
            <person name="Grigoriev V."/>
            <person name="Mahadevaiah S.K."/>
            <person name="Ojarikre O.A."/>
            <person name="Toure A."/>
            <person name="von Glasenapp E."/>
            <person name="Rattigan A."/>
            <person name="Turner J.M.A."/>
            <person name="Elliott D.J."/>
            <person name="Burgoyne P.S."/>
        </authorList>
    </citation>
    <scope>OVEREXPRESSION</scope>
</reference>
<reference key="5">
    <citation type="journal article" date="2004" name="Cytogenet. Genome Res.">
        <authorList>
            <person name="Szot M."/>
            <person name="Grigoriev V."/>
            <person name="Mahadevaiah S.K."/>
            <person name="Ojarikre O.A."/>
            <person name="Toure A."/>
            <person name="von Glasenapp E."/>
            <person name="Rattigan A."/>
            <person name="Turner J.M.A."/>
            <person name="Elliott D.J."/>
            <person name="Burgoyne P.S."/>
        </authorList>
    </citation>
    <scope>ERRATUM OF PUBMED:15051956</scope>
</reference>
<sequence length="380" mass="43143">MAETDQPGKIFIGGLNIKTRQKTLQEIFGRFGPVARVILMRDRETKKSRGFAFLTFRRPADAKNAVKEMNGVILDGKRIKVKQARRPSSLESGSKKRPPSFSRTRGASRILKCGRGGRSRARSGPSCEGNLGGDRYTPNFNVSSSGRHFAVKRNPSSKRDGPPSKRSATSAQTRSNTGLRGREPHRREISRNMPRGEPASSRRDEYPLPRDYGQSSNDRKYESTSRGYCDYGNYHSREESASKVFSDHAGYLGGRDRDFSEYLSGNSYRDTYRSYGRFHEAPSARGGNNRYDDYSNSQDGYGGRGEPYISNRSNIYSSDYERSGRQEVLPPPIDREYFDREGRQERGHSPKDGLYSASRESYSSNTKIWGIPWRSWRKQI</sequence>
<accession>Q60990</accession>
<accession>E9Q2F9</accession>
<protein>
    <recommendedName>
        <fullName evidence="8">RNA-binding motif protein, Y chromosome, family 9</fullName>
    </recommendedName>
    <alternativeName>
        <fullName evidence="8">RNA-binding motif protein 1</fullName>
    </alternativeName>
    <alternativeName>
        <fullName evidence="8">RNA-binding motif protein, Y chromosome, family 1 member B</fullName>
    </alternativeName>
</protein>
<name>RBY1B_MOUSE</name>
<keyword id="KW-0507">mRNA processing</keyword>
<keyword id="KW-0508">mRNA splicing</keyword>
<keyword id="KW-0539">Nucleus</keyword>
<keyword id="KW-1185">Reference proteome</keyword>
<keyword id="KW-0694">RNA-binding</keyword>
<gene>
    <name evidence="9" type="primary">Rbmyf9</name>
    <name evidence="9" type="synonym">Gm3376</name>
    <name evidence="7" type="synonym">Rbm</name>
    <name evidence="8" type="synonym">Rbmy1b</name>
</gene>
<organism>
    <name type="scientific">Mus musculus</name>
    <name type="common">Mouse</name>
    <dbReference type="NCBI Taxonomy" id="10090"/>
    <lineage>
        <taxon>Eukaryota</taxon>
        <taxon>Metazoa</taxon>
        <taxon>Chordata</taxon>
        <taxon>Craniata</taxon>
        <taxon>Vertebrata</taxon>
        <taxon>Euteleostomi</taxon>
        <taxon>Mammalia</taxon>
        <taxon>Eutheria</taxon>
        <taxon>Euarchontoglires</taxon>
        <taxon>Glires</taxon>
        <taxon>Rodentia</taxon>
        <taxon>Myomorpha</taxon>
        <taxon>Muroidea</taxon>
        <taxon>Muridae</taxon>
        <taxon>Murinae</taxon>
        <taxon>Mus</taxon>
        <taxon>Mus</taxon>
    </lineage>
</organism>
<dbReference type="EMBL" id="U36929">
    <property type="protein sequence ID" value="AAB81555.1"/>
    <property type="molecule type" value="mRNA"/>
</dbReference>
<dbReference type="EMBL" id="AC163691">
    <property type="status" value="NOT_ANNOTATED_CDS"/>
    <property type="molecule type" value="Genomic_DNA"/>
</dbReference>
<dbReference type="CCDS" id="CCDS85842.1"/>
<dbReference type="RefSeq" id="NP_001257441.1">
    <property type="nucleotide sequence ID" value="NM_001270512.1"/>
</dbReference>
<dbReference type="SMR" id="Q60990"/>
<dbReference type="FunCoup" id="Q60990">
    <property type="interactions" value="87"/>
</dbReference>
<dbReference type="STRING" id="10090.ENSMUSP00000141183"/>
<dbReference type="PaxDb" id="10090-ENSMUSP00000141183"/>
<dbReference type="Ensembl" id="ENSMUST00000180202.2">
    <property type="protein sequence ID" value="ENSMUSP00000136808.2"/>
    <property type="gene ID" value="ENSMUSG00000096520.8"/>
</dbReference>
<dbReference type="Ensembl" id="ENSMUST00000186140.7">
    <property type="protein sequence ID" value="ENSMUSP00000141183.2"/>
    <property type="gene ID" value="ENSMUSG00000096520.8"/>
</dbReference>
<dbReference type="GeneID" id="100041505"/>
<dbReference type="KEGG" id="mmu:100041505"/>
<dbReference type="AGR" id="MGI:3781554"/>
<dbReference type="CTD" id="100041505"/>
<dbReference type="MGI" id="MGI:3781554">
    <property type="gene designation" value="Rbmyf9"/>
</dbReference>
<dbReference type="VEuPathDB" id="HostDB:ENSMUSG00000096520"/>
<dbReference type="eggNOG" id="ENOG502QS9N">
    <property type="taxonomic scope" value="Eukaryota"/>
</dbReference>
<dbReference type="GeneTree" id="ENSGT00940000163524"/>
<dbReference type="HOGENOM" id="CLU_042286_0_0_1"/>
<dbReference type="InParanoid" id="Q60990"/>
<dbReference type="OMA" id="HESYTIS"/>
<dbReference type="OrthoDB" id="87697at9989"/>
<dbReference type="PhylomeDB" id="Q60990"/>
<dbReference type="TreeFam" id="TF331833"/>
<dbReference type="BioGRID-ORCS" id="100041505">
    <property type="hits" value="0 hits in 33 CRISPR screens"/>
</dbReference>
<dbReference type="PRO" id="PR:Q60990"/>
<dbReference type="Proteomes" id="UP000000589">
    <property type="component" value="Chromosome Y"/>
</dbReference>
<dbReference type="RNAct" id="Q60990">
    <property type="molecule type" value="protein"/>
</dbReference>
<dbReference type="Bgee" id="ENSMUSG00000096520">
    <property type="expression patterns" value="Expressed in spermatid and 8 other cell types or tissues"/>
</dbReference>
<dbReference type="GO" id="GO:0005634">
    <property type="term" value="C:nucleus"/>
    <property type="evidence" value="ECO:0007669"/>
    <property type="project" value="UniProtKB-SubCell"/>
</dbReference>
<dbReference type="GO" id="GO:0003723">
    <property type="term" value="F:RNA binding"/>
    <property type="evidence" value="ECO:0007669"/>
    <property type="project" value="UniProtKB-KW"/>
</dbReference>
<dbReference type="GO" id="GO:0006397">
    <property type="term" value="P:mRNA processing"/>
    <property type="evidence" value="ECO:0007669"/>
    <property type="project" value="UniProtKB-KW"/>
</dbReference>
<dbReference type="GO" id="GO:0008380">
    <property type="term" value="P:RNA splicing"/>
    <property type="evidence" value="ECO:0007669"/>
    <property type="project" value="UniProtKB-KW"/>
</dbReference>
<dbReference type="FunFam" id="3.30.70.330:FF:000119">
    <property type="entry name" value="RNA-binding motif protein, X chromosome"/>
    <property type="match status" value="1"/>
</dbReference>
<dbReference type="Gene3D" id="3.30.70.330">
    <property type="match status" value="1"/>
</dbReference>
<dbReference type="InterPro" id="IPR012677">
    <property type="entry name" value="Nucleotide-bd_a/b_plait_sf"/>
</dbReference>
<dbReference type="InterPro" id="IPR035979">
    <property type="entry name" value="RBD_domain_sf"/>
</dbReference>
<dbReference type="InterPro" id="IPR050441">
    <property type="entry name" value="RBM"/>
</dbReference>
<dbReference type="InterPro" id="IPR000504">
    <property type="entry name" value="RRM_dom"/>
</dbReference>
<dbReference type="PANTHER" id="PTHR48034">
    <property type="entry name" value="TRANSFORMER-2 SEX-DETERMINING PROTEIN-RELATED"/>
    <property type="match status" value="1"/>
</dbReference>
<dbReference type="Pfam" id="PF00076">
    <property type="entry name" value="RRM_1"/>
    <property type="match status" value="1"/>
</dbReference>
<dbReference type="SMART" id="SM00360">
    <property type="entry name" value="RRM"/>
    <property type="match status" value="1"/>
</dbReference>
<dbReference type="SUPFAM" id="SSF54928">
    <property type="entry name" value="RNA-binding domain, RBD"/>
    <property type="match status" value="1"/>
</dbReference>
<dbReference type="PROSITE" id="PS50102">
    <property type="entry name" value="RRM"/>
    <property type="match status" value="1"/>
</dbReference>
<evidence type="ECO:0000250" key="1"/>
<evidence type="ECO:0000250" key="2">
    <source>
        <dbReference type="UniProtKB" id="Q15415"/>
    </source>
</evidence>
<evidence type="ECO:0000255" key="3">
    <source>
        <dbReference type="PROSITE-ProRule" id="PRU00176"/>
    </source>
</evidence>
<evidence type="ECO:0000256" key="4">
    <source>
        <dbReference type="SAM" id="MobiDB-lite"/>
    </source>
</evidence>
<evidence type="ECO:0000269" key="5">
    <source>
    </source>
</evidence>
<evidence type="ECO:0000269" key="6">
    <source>
    </source>
</evidence>
<evidence type="ECO:0000303" key="7">
    <source>
    </source>
</evidence>
<evidence type="ECO:0000305" key="8"/>
<evidence type="ECO:0000312" key="9">
    <source>
        <dbReference type="MGI" id="MGI:3781554"/>
    </source>
</evidence>